<organismHost>
    <name type="scientific">Orgyia pseudotsugata</name>
    <name type="common">Douglas-fir tussock moth</name>
    <dbReference type="NCBI Taxonomy" id="33414"/>
</organismHost>
<protein>
    <recommendedName>
        <fullName>Uncharacterized 52.7 kDa protein</fullName>
    </recommendedName>
</protein>
<proteinExistence type="predicted"/>
<sequence>MAPTRALRLALKKQDYARAADLAIESRANRLFLLDYHDPDFWAYVSRNCYNRDKFLSAFGDKIDWNEVSASPLTTATARTFAAKLNWARVSRQPFLRQQFIYEFGDRLDMQVVSATYNNLSLAVQQKFAAALNWDRVVLSHYMLPEWFEPPICDFINFDAVAKHKHLDKSYINAPHCINKINLGVYMRNINKISDALIVYCLREGRVHELRVVSGAVPWADHMRVFDEYPGLANTLRLDWASVPAWTAACAPPAHYFRRSWPAAFEREFVNSTYWDKFIEYASGTTNAASAAFALFLFDNFKSRVDWRRLQVGDRFVNLAALHRARGPLVALEAAGDDERVWRAYGRFVSGGDAAHCELLIPINMSVRDAYRKMALVQACASQHEHDKARTCERRIALNGGEDALLNWNLLSATQQVCPFNLRHLQNANAQTYRRDNPHYVQDVYEKMIAAQMNINEFL</sequence>
<dbReference type="EMBL" id="U75930">
    <property type="protein sequence ID" value="AAC59037.1"/>
    <property type="molecule type" value="Genomic_DNA"/>
</dbReference>
<dbReference type="RefSeq" id="NP_046194.1">
    <property type="nucleotide sequence ID" value="NC_001875.2"/>
</dbReference>
<dbReference type="KEGG" id="vg:912057"/>
<dbReference type="OrthoDB" id="2950at10239"/>
<dbReference type="Proteomes" id="UP000009248">
    <property type="component" value="Genome"/>
</dbReference>
<reference key="1">
    <citation type="journal article" date="1997" name="Virology">
        <title>The sequence of the Orgyia pseudotsugata multinucleocapsid nuclear polyhedrosis virus genome.</title>
        <authorList>
            <person name="Ahrens C.H."/>
            <person name="Russell R.R."/>
            <person name="Funk C.J."/>
            <person name="Evans J."/>
            <person name="Harwood S."/>
            <person name="Rohrmann G.F."/>
        </authorList>
    </citation>
    <scope>NUCLEOTIDE SEQUENCE [LARGE SCALE GENOMIC DNA]</scope>
</reference>
<feature type="chain" id="PRO_0000132971" description="Uncharacterized 52.7 kDa protein">
    <location>
        <begin position="1"/>
        <end position="459"/>
    </location>
</feature>
<keyword id="KW-1185">Reference proteome</keyword>
<gene>
    <name type="ORF">ORF38</name>
</gene>
<accession>O10293</accession>
<name>Y030_NPVOP</name>
<organism>
    <name type="scientific">Orgyia pseudotsugata multicapsid polyhedrosis virus</name>
    <name type="common">OpMNPV</name>
    <dbReference type="NCBI Taxonomy" id="262177"/>
    <lineage>
        <taxon>Viruses</taxon>
        <taxon>Viruses incertae sedis</taxon>
        <taxon>Naldaviricetes</taxon>
        <taxon>Lefavirales</taxon>
        <taxon>Baculoviridae</taxon>
        <taxon>Alphabaculovirus</taxon>
        <taxon>Alphabaculovirus orpseudotsugatae</taxon>
    </lineage>
</organism>